<protein>
    <recommendedName>
        <fullName>Zinc finger protein GLI1</fullName>
        <shortName>GLI</shortName>
    </recommendedName>
</protein>
<accession>P55878</accession>
<evidence type="ECO:0000250" key="1">
    <source>
        <dbReference type="UniProtKB" id="P08151"/>
    </source>
</evidence>
<evidence type="ECO:0000255" key="2">
    <source>
        <dbReference type="PROSITE-ProRule" id="PRU00042"/>
    </source>
</evidence>
<evidence type="ECO:0000256" key="3">
    <source>
        <dbReference type="SAM" id="MobiDB-lite"/>
    </source>
</evidence>
<evidence type="ECO:0000305" key="4"/>
<evidence type="ECO:0000305" key="5">
    <source>
    </source>
</evidence>
<comment type="function">
    <text evidence="1 5">Acts as a transcriptional activator. Binds to the DNA consensus sequence 5'-GACCACCCA-3' (By similarity). May regulate the transcription of specific genes during normal development (PubMed:8948590). May play a role in craniofacial development and digital development, as well as development of the central nervous system and gastrointestinal tract (PubMed:8948590). Mediates SHH signaling (PubMed:8948590). Plays a role in cell proliferation and differentiation via its role in SHH signaling.</text>
</comment>
<comment type="subcellular location">
    <subcellularLocation>
        <location evidence="1">Cytoplasm</location>
    </subcellularLocation>
    <subcellularLocation>
        <location evidence="1">Nucleus</location>
    </subcellularLocation>
</comment>
<comment type="similarity">
    <text evidence="4">Belongs to the GLI C2H2-type zinc-finger protein family.</text>
</comment>
<sequence>MFNPVTPQARPYAEHCCPRPLHGASAGTPGLQGLDFPVCHQPNLASSHHGYGLVPGTEHPGGAADGSRFSTPRGAGKLGKKRALSISPLSDSSVDLQTVIRTSPNSLVAFINSRCASAGGSYGHLSISTISPSLGYQNPPGQQKGQGQLFSHTPPLPPCSSHETLSSRPGLLHPTPARGTIKHCQQLKLERSLSSPLTAKYPEEKSEGDISSPASTGTQDPLLGMLSVRDDLEKEDGKPESETIYETNCYWDGCAKEFDTQEQLVHHINNEHIHGEKKEFVCHWAACSREQRPFKAQYMLVVHMRRHTGEKPHKCTFEGCNKAYSRLENLKTHLRSHTGEKPYVCEHEGCNKAFSNASDRAKHQNRTHSNEKPYICKIPGCTKRYTDPSSLRKHVKTVHGPDAHVTKKHRGSVVPGHALPASAAPQDMKQEKNTNGPAEIRKDDGKLLVPDLVSKPQPSPGGQSSCSSDRSPLGSTTNNDSGVEMTGNTGGSYEDLVHAGGCGARGSHGHLGADGLQKLENLRIDKLKQMRKPSTKGLNLPAIPEPVCRRCVRVCV</sequence>
<keyword id="KW-0010">Activator</keyword>
<keyword id="KW-0963">Cytoplasm</keyword>
<keyword id="KW-0217">Developmental protein</keyword>
<keyword id="KW-0221">Differentiation</keyword>
<keyword id="KW-0238">DNA-binding</keyword>
<keyword id="KW-0479">Metal-binding</keyword>
<keyword id="KW-0539">Nucleus</keyword>
<keyword id="KW-0656">Proto-oncogene</keyword>
<keyword id="KW-1185">Reference proteome</keyword>
<keyword id="KW-0677">Repeat</keyword>
<keyword id="KW-0804">Transcription</keyword>
<keyword id="KW-0805">Transcription regulation</keyword>
<keyword id="KW-0862">Zinc</keyword>
<keyword id="KW-0863">Zinc-finger</keyword>
<name>GLI1_CHICK</name>
<gene>
    <name type="primary">GLI1</name>
    <name type="synonym">GLI</name>
</gene>
<feature type="chain" id="PRO_0000047199" description="Zinc finger protein GLI1">
    <location>
        <begin position="1"/>
        <end position="556" status="greater than"/>
    </location>
</feature>
<feature type="zinc finger region" description="C2H2-type 1" evidence="2">
    <location>
        <begin position="247"/>
        <end position="272"/>
    </location>
</feature>
<feature type="zinc finger region" description="C2H2-type 2" evidence="2">
    <location>
        <begin position="280"/>
        <end position="307"/>
    </location>
</feature>
<feature type="zinc finger region" description="C2H2-type 3" evidence="2">
    <location>
        <begin position="313"/>
        <end position="337"/>
    </location>
</feature>
<feature type="zinc finger region" description="C2H2-type 4" evidence="2">
    <location>
        <begin position="343"/>
        <end position="368"/>
    </location>
</feature>
<feature type="zinc finger region" description="C2H2-type 5" evidence="2">
    <location>
        <begin position="374"/>
        <end position="399"/>
    </location>
</feature>
<feature type="region of interest" description="Disordered" evidence="3">
    <location>
        <begin position="57"/>
        <end position="83"/>
    </location>
</feature>
<feature type="region of interest" description="Disordered" evidence="3">
    <location>
        <begin position="133"/>
        <end position="178"/>
    </location>
</feature>
<feature type="region of interest" description="Disordered" evidence="3">
    <location>
        <begin position="200"/>
        <end position="222"/>
    </location>
</feature>
<feature type="region of interest" description="Interaction with DNA" evidence="1">
    <location>
        <begin position="295"/>
        <end position="303"/>
    </location>
</feature>
<feature type="region of interest" description="Interaction with DNA" evidence="1">
    <location>
        <begin position="357"/>
        <end position="362"/>
    </location>
</feature>
<feature type="region of interest" description="Disordered" evidence="3">
    <location>
        <begin position="387"/>
        <end position="492"/>
    </location>
</feature>
<feature type="region of interest" description="Interaction with DNA" evidence="1">
    <location>
        <begin position="387"/>
        <end position="393"/>
    </location>
</feature>
<feature type="compositionally biased region" description="Low complexity" evidence="3">
    <location>
        <begin position="135"/>
        <end position="148"/>
    </location>
</feature>
<feature type="compositionally biased region" description="Low complexity" evidence="3">
    <location>
        <begin position="454"/>
        <end position="472"/>
    </location>
</feature>
<feature type="non-terminal residue">
    <location>
        <position position="556"/>
    </location>
</feature>
<proteinExistence type="evidence at transcript level"/>
<organism>
    <name type="scientific">Gallus gallus</name>
    <name type="common">Chicken</name>
    <dbReference type="NCBI Taxonomy" id="9031"/>
    <lineage>
        <taxon>Eukaryota</taxon>
        <taxon>Metazoa</taxon>
        <taxon>Chordata</taxon>
        <taxon>Craniata</taxon>
        <taxon>Vertebrata</taxon>
        <taxon>Euteleostomi</taxon>
        <taxon>Archelosauria</taxon>
        <taxon>Archosauria</taxon>
        <taxon>Dinosauria</taxon>
        <taxon>Saurischia</taxon>
        <taxon>Theropoda</taxon>
        <taxon>Coelurosauria</taxon>
        <taxon>Aves</taxon>
        <taxon>Neognathae</taxon>
        <taxon>Galloanserae</taxon>
        <taxon>Galliformes</taxon>
        <taxon>Phasianidae</taxon>
        <taxon>Phasianinae</taxon>
        <taxon>Gallus</taxon>
    </lineage>
</organism>
<reference key="1">
    <citation type="journal article" date="1996" name="Dev. Biol.">
        <title>Sonic hedgehog differentially regulates expression of GLI and GLI3 during limb development.</title>
        <authorList>
            <person name="Marigo V."/>
            <person name="Johnson R.L."/>
            <person name="Vortkamp A."/>
            <person name="Tabin C.J."/>
        </authorList>
    </citation>
    <scope>NUCLEOTIDE SEQUENCE [MRNA]</scope>
    <scope>FUNCTION</scope>
</reference>
<dbReference type="EMBL" id="U60762">
    <property type="protein sequence ID" value="AAB51659.1"/>
    <property type="molecule type" value="mRNA"/>
</dbReference>
<dbReference type="SMR" id="P55878"/>
<dbReference type="FunCoup" id="P55878">
    <property type="interactions" value="316"/>
</dbReference>
<dbReference type="STRING" id="9031.ENSGALP00000049322"/>
<dbReference type="GlyGen" id="P55878">
    <property type="glycosylation" value="1 site"/>
</dbReference>
<dbReference type="PaxDb" id="9031-ENSGALP00000023546"/>
<dbReference type="VEuPathDB" id="HostDB:geneid_396045"/>
<dbReference type="eggNOG" id="KOG1721">
    <property type="taxonomic scope" value="Eukaryota"/>
</dbReference>
<dbReference type="InParanoid" id="P55878"/>
<dbReference type="OrthoDB" id="3214149at2759"/>
<dbReference type="PhylomeDB" id="P55878"/>
<dbReference type="Proteomes" id="UP000000539">
    <property type="component" value="Unassembled WGS sequence"/>
</dbReference>
<dbReference type="GO" id="GO:0005737">
    <property type="term" value="C:cytoplasm"/>
    <property type="evidence" value="ECO:0000250"/>
    <property type="project" value="UniProtKB"/>
</dbReference>
<dbReference type="GO" id="GO:0005634">
    <property type="term" value="C:nucleus"/>
    <property type="evidence" value="ECO:0000250"/>
    <property type="project" value="UniProtKB"/>
</dbReference>
<dbReference type="GO" id="GO:0003682">
    <property type="term" value="F:chromatin binding"/>
    <property type="evidence" value="ECO:0000250"/>
    <property type="project" value="UniProtKB"/>
</dbReference>
<dbReference type="GO" id="GO:0000981">
    <property type="term" value="F:DNA-binding transcription factor activity, RNA polymerase II-specific"/>
    <property type="evidence" value="ECO:0000318"/>
    <property type="project" value="GO_Central"/>
</dbReference>
<dbReference type="GO" id="GO:0000978">
    <property type="term" value="F:RNA polymerase II cis-regulatory region sequence-specific DNA binding"/>
    <property type="evidence" value="ECO:0000318"/>
    <property type="project" value="GO_Central"/>
</dbReference>
<dbReference type="GO" id="GO:0043565">
    <property type="term" value="F:sequence-specific DNA binding"/>
    <property type="evidence" value="ECO:0000250"/>
    <property type="project" value="UniProtKB"/>
</dbReference>
<dbReference type="GO" id="GO:0008270">
    <property type="term" value="F:zinc ion binding"/>
    <property type="evidence" value="ECO:0007669"/>
    <property type="project" value="UniProtKB-KW"/>
</dbReference>
<dbReference type="GO" id="GO:0030154">
    <property type="term" value="P:cell differentiation"/>
    <property type="evidence" value="ECO:0007669"/>
    <property type="project" value="UniProtKB-KW"/>
</dbReference>
<dbReference type="GO" id="GO:0045893">
    <property type="term" value="P:positive regulation of DNA-templated transcription"/>
    <property type="evidence" value="ECO:0000250"/>
    <property type="project" value="UniProtKB"/>
</dbReference>
<dbReference type="GO" id="GO:0010628">
    <property type="term" value="P:positive regulation of gene expression"/>
    <property type="evidence" value="ECO:0000315"/>
    <property type="project" value="AgBase"/>
</dbReference>
<dbReference type="GO" id="GO:0045944">
    <property type="term" value="P:positive regulation of transcription by RNA polymerase II"/>
    <property type="evidence" value="ECO:0000250"/>
    <property type="project" value="UniProtKB"/>
</dbReference>
<dbReference type="GO" id="GO:0006357">
    <property type="term" value="P:regulation of transcription by RNA polymerase II"/>
    <property type="evidence" value="ECO:0000318"/>
    <property type="project" value="GO_Central"/>
</dbReference>
<dbReference type="GO" id="GO:0007224">
    <property type="term" value="P:smoothened signaling pathway"/>
    <property type="evidence" value="ECO:0000318"/>
    <property type="project" value="GO_Central"/>
</dbReference>
<dbReference type="FunFam" id="3.30.160.60:FF:000019">
    <property type="entry name" value="GLI family zinc finger 3"/>
    <property type="match status" value="1"/>
</dbReference>
<dbReference type="FunFam" id="3.30.160.60:FF:000031">
    <property type="entry name" value="GLI family zinc finger 3"/>
    <property type="match status" value="1"/>
</dbReference>
<dbReference type="FunFam" id="3.30.160.60:FF:000036">
    <property type="entry name" value="GLI family zinc finger 3"/>
    <property type="match status" value="1"/>
</dbReference>
<dbReference type="FunFam" id="3.30.160.60:FF:000048">
    <property type="entry name" value="GLI family zinc finger 3"/>
    <property type="match status" value="1"/>
</dbReference>
<dbReference type="FunFam" id="3.30.160.60:FF:000068">
    <property type="entry name" value="GLI family zinc finger 3"/>
    <property type="match status" value="1"/>
</dbReference>
<dbReference type="Gene3D" id="3.30.160.60">
    <property type="entry name" value="Classic Zinc Finger"/>
    <property type="match status" value="5"/>
</dbReference>
<dbReference type="InterPro" id="IPR043359">
    <property type="entry name" value="GLI-like"/>
</dbReference>
<dbReference type="InterPro" id="IPR056436">
    <property type="entry name" value="Znf-C2H2_ZIC1-5/GLI1-3-like"/>
</dbReference>
<dbReference type="InterPro" id="IPR036236">
    <property type="entry name" value="Znf_C2H2_sf"/>
</dbReference>
<dbReference type="InterPro" id="IPR013087">
    <property type="entry name" value="Znf_C2H2_type"/>
</dbReference>
<dbReference type="PANTHER" id="PTHR45718">
    <property type="entry name" value="TRANSCRIPTIONAL ACTIVATOR CUBITUS INTERRUPTUS"/>
    <property type="match status" value="1"/>
</dbReference>
<dbReference type="PANTHER" id="PTHR45718:SF2">
    <property type="entry name" value="ZINC FINGER PROTEIN GLI1"/>
    <property type="match status" value="1"/>
</dbReference>
<dbReference type="Pfam" id="PF00096">
    <property type="entry name" value="zf-C2H2"/>
    <property type="match status" value="3"/>
</dbReference>
<dbReference type="Pfam" id="PF23561">
    <property type="entry name" value="zf-C2H2_15"/>
    <property type="match status" value="1"/>
</dbReference>
<dbReference type="SMART" id="SM00355">
    <property type="entry name" value="ZnF_C2H2"/>
    <property type="match status" value="5"/>
</dbReference>
<dbReference type="SUPFAM" id="SSF57667">
    <property type="entry name" value="beta-beta-alpha zinc fingers"/>
    <property type="match status" value="3"/>
</dbReference>
<dbReference type="PROSITE" id="PS00028">
    <property type="entry name" value="ZINC_FINGER_C2H2_1"/>
    <property type="match status" value="4"/>
</dbReference>
<dbReference type="PROSITE" id="PS50157">
    <property type="entry name" value="ZINC_FINGER_C2H2_2"/>
    <property type="match status" value="5"/>
</dbReference>